<organism>
    <name type="scientific">Mycobacterium tuberculosis (strain ATCC 25618 / H37Rv)</name>
    <dbReference type="NCBI Taxonomy" id="83332"/>
    <lineage>
        <taxon>Bacteria</taxon>
        <taxon>Bacillati</taxon>
        <taxon>Actinomycetota</taxon>
        <taxon>Actinomycetes</taxon>
        <taxon>Mycobacteriales</taxon>
        <taxon>Mycobacteriaceae</taxon>
        <taxon>Mycobacterium</taxon>
        <taxon>Mycobacterium tuberculosis complex</taxon>
    </lineage>
</organism>
<dbReference type="EC" id="2.7.13.3" evidence="1"/>
<dbReference type="EMBL" id="AL123456">
    <property type="protein sequence ID" value="CCP44800.1"/>
    <property type="molecule type" value="Genomic_DNA"/>
</dbReference>
<dbReference type="PIR" id="B70942">
    <property type="entry name" value="B70942"/>
</dbReference>
<dbReference type="RefSeq" id="NP_216543.1">
    <property type="nucleotide sequence ID" value="NC_000962.3"/>
</dbReference>
<dbReference type="RefSeq" id="WP_003899138.1">
    <property type="nucleotide sequence ID" value="NZ_NVQJ01000046.1"/>
</dbReference>
<dbReference type="PDB" id="2VZW">
    <property type="method" value="X-ray"/>
    <property type="resolution" value="2.30 A"/>
    <property type="chains" value="A/B=61-208"/>
</dbReference>
<dbReference type="PDB" id="3ZXQ">
    <property type="method" value="X-ray"/>
    <property type="resolution" value="1.90 A"/>
    <property type="chains" value="A/B=451-573"/>
</dbReference>
<dbReference type="PDBsum" id="2VZW"/>
<dbReference type="PDBsum" id="3ZXQ"/>
<dbReference type="SMR" id="P9WGK1"/>
<dbReference type="STRING" id="83332.Rv2027c"/>
<dbReference type="iPTMnet" id="P9WGK1"/>
<dbReference type="PaxDb" id="83332-Rv2027c"/>
<dbReference type="GeneID" id="888471"/>
<dbReference type="KEGG" id="mtu:Rv2027c"/>
<dbReference type="KEGG" id="mtv:RVBD_2027c"/>
<dbReference type="TubercuList" id="Rv2027c"/>
<dbReference type="eggNOG" id="COG2203">
    <property type="taxonomic scope" value="Bacteria"/>
</dbReference>
<dbReference type="eggNOG" id="COG4585">
    <property type="taxonomic scope" value="Bacteria"/>
</dbReference>
<dbReference type="InParanoid" id="P9WGK1"/>
<dbReference type="OrthoDB" id="5241249at2"/>
<dbReference type="PhylomeDB" id="P9WGK1"/>
<dbReference type="BRENDA" id="2.7.13.3">
    <property type="organism ID" value="3445"/>
</dbReference>
<dbReference type="EvolutionaryTrace" id="P9WGK1"/>
<dbReference type="Proteomes" id="UP000001584">
    <property type="component" value="Chromosome"/>
</dbReference>
<dbReference type="GO" id="GO:0005737">
    <property type="term" value="C:cytoplasm"/>
    <property type="evidence" value="ECO:0007669"/>
    <property type="project" value="UniProtKB-SubCell"/>
</dbReference>
<dbReference type="GO" id="GO:0005886">
    <property type="term" value="C:plasma membrane"/>
    <property type="evidence" value="ECO:0000318"/>
    <property type="project" value="GO_Central"/>
</dbReference>
<dbReference type="GO" id="GO:0005524">
    <property type="term" value="F:ATP binding"/>
    <property type="evidence" value="ECO:0000314"/>
    <property type="project" value="MTBBASE"/>
</dbReference>
<dbReference type="GO" id="GO:0005509">
    <property type="term" value="F:calcium ion binding"/>
    <property type="evidence" value="ECO:0000314"/>
    <property type="project" value="MTBBASE"/>
</dbReference>
<dbReference type="GO" id="GO:0070025">
    <property type="term" value="F:carbon monoxide binding"/>
    <property type="evidence" value="ECO:0000314"/>
    <property type="project" value="MTBBASE"/>
</dbReference>
<dbReference type="GO" id="GO:0020037">
    <property type="term" value="F:heme binding"/>
    <property type="evidence" value="ECO:0000314"/>
    <property type="project" value="MTBBASE"/>
</dbReference>
<dbReference type="GO" id="GO:0000287">
    <property type="term" value="F:magnesium ion binding"/>
    <property type="evidence" value="ECO:0000314"/>
    <property type="project" value="MTBBASE"/>
</dbReference>
<dbReference type="GO" id="GO:0070026">
    <property type="term" value="F:nitric oxide binding"/>
    <property type="evidence" value="ECO:0000314"/>
    <property type="project" value="MTBBASE"/>
</dbReference>
<dbReference type="GO" id="GO:0019825">
    <property type="term" value="F:oxygen binding"/>
    <property type="evidence" value="ECO:0000314"/>
    <property type="project" value="MTBBASE"/>
</dbReference>
<dbReference type="GO" id="GO:0019826">
    <property type="term" value="F:oxygen sensor activity"/>
    <property type="evidence" value="ECO:0000314"/>
    <property type="project" value="MTBBASE"/>
</dbReference>
<dbReference type="GO" id="GO:0000155">
    <property type="term" value="F:phosphorelay sensor kinase activity"/>
    <property type="evidence" value="ECO:0000314"/>
    <property type="project" value="UniProtKB"/>
</dbReference>
<dbReference type="GO" id="GO:0046983">
    <property type="term" value="F:protein dimerization activity"/>
    <property type="evidence" value="ECO:0007669"/>
    <property type="project" value="InterPro"/>
</dbReference>
<dbReference type="GO" id="GO:0004673">
    <property type="term" value="F:protein histidine kinase activity"/>
    <property type="evidence" value="ECO:0000314"/>
    <property type="project" value="MTBBASE"/>
</dbReference>
<dbReference type="GO" id="GO:0004672">
    <property type="term" value="F:protein kinase activity"/>
    <property type="evidence" value="ECO:0000314"/>
    <property type="project" value="MTBBASE"/>
</dbReference>
<dbReference type="GO" id="GO:0070483">
    <property type="term" value="P:detection of hypoxia"/>
    <property type="evidence" value="ECO:0000314"/>
    <property type="project" value="UniProtKB"/>
</dbReference>
<dbReference type="FunFam" id="3.30.450.40:FF:000052">
    <property type="entry name" value="Oxygen sensor histidine kinase response regulator DevS/DosS"/>
    <property type="match status" value="1"/>
</dbReference>
<dbReference type="Gene3D" id="1.20.5.1930">
    <property type="match status" value="1"/>
</dbReference>
<dbReference type="Gene3D" id="3.30.450.40">
    <property type="match status" value="2"/>
</dbReference>
<dbReference type="Gene3D" id="3.30.565.10">
    <property type="entry name" value="Histidine kinase-like ATPase, C-terminal domain"/>
    <property type="match status" value="1"/>
</dbReference>
<dbReference type="InterPro" id="IPR003018">
    <property type="entry name" value="GAF"/>
</dbReference>
<dbReference type="InterPro" id="IPR029016">
    <property type="entry name" value="GAF-like_dom_sf"/>
</dbReference>
<dbReference type="InterPro" id="IPR036890">
    <property type="entry name" value="HATPase_C_sf"/>
</dbReference>
<dbReference type="InterPro" id="IPR050482">
    <property type="entry name" value="Sensor_HK_TwoCompSys"/>
</dbReference>
<dbReference type="InterPro" id="IPR011712">
    <property type="entry name" value="Sig_transdc_His_kin_sub3_dim/P"/>
</dbReference>
<dbReference type="PANTHER" id="PTHR24421">
    <property type="entry name" value="NITRATE/NITRITE SENSOR PROTEIN NARX-RELATED"/>
    <property type="match status" value="1"/>
</dbReference>
<dbReference type="PANTHER" id="PTHR24421:SF56">
    <property type="entry name" value="OXYGEN SENSOR HISTIDINE KINASE RESPONSE REGULATOR DOST"/>
    <property type="match status" value="1"/>
</dbReference>
<dbReference type="Pfam" id="PF13185">
    <property type="entry name" value="GAF_2"/>
    <property type="match status" value="1"/>
</dbReference>
<dbReference type="Pfam" id="PF13492">
    <property type="entry name" value="GAF_3"/>
    <property type="match status" value="1"/>
</dbReference>
<dbReference type="Pfam" id="PF02518">
    <property type="entry name" value="HATPase_c"/>
    <property type="match status" value="1"/>
</dbReference>
<dbReference type="Pfam" id="PF07730">
    <property type="entry name" value="HisKA_3"/>
    <property type="match status" value="1"/>
</dbReference>
<dbReference type="SMART" id="SM00065">
    <property type="entry name" value="GAF"/>
    <property type="match status" value="2"/>
</dbReference>
<dbReference type="SMART" id="SM00387">
    <property type="entry name" value="HATPase_c"/>
    <property type="match status" value="1"/>
</dbReference>
<dbReference type="SUPFAM" id="SSF55874">
    <property type="entry name" value="ATPase domain of HSP90 chaperone/DNA topoisomerase II/histidine kinase"/>
    <property type="match status" value="1"/>
</dbReference>
<dbReference type="SUPFAM" id="SSF55781">
    <property type="entry name" value="GAF domain-like"/>
    <property type="match status" value="2"/>
</dbReference>
<accession>P9WGK1</accession>
<accession>L0TB49</accession>
<accession>O53473</accession>
<accession>Q7D7L6</accession>
<proteinExistence type="evidence at protein level"/>
<evidence type="ECO:0000269" key="1">
    <source>
    </source>
</evidence>
<evidence type="ECO:0000269" key="2">
    <source>
    </source>
</evidence>
<evidence type="ECO:0000269" key="3">
    <source>
    </source>
</evidence>
<evidence type="ECO:0000269" key="4">
    <source>
    </source>
</evidence>
<evidence type="ECO:0000269" key="5">
    <source>
    </source>
</evidence>
<evidence type="ECO:0000269" key="6">
    <source>
    </source>
</evidence>
<evidence type="ECO:0000269" key="7">
    <source>
    </source>
</evidence>
<evidence type="ECO:0000269" key="8">
    <source>
    </source>
</evidence>
<evidence type="ECO:0000269" key="9">
    <source>
    </source>
</evidence>
<evidence type="ECO:0000269" key="10">
    <source>
    </source>
</evidence>
<evidence type="ECO:0000269" key="11">
    <source>
    </source>
</evidence>
<evidence type="ECO:0000303" key="12">
    <source>
    </source>
</evidence>
<evidence type="ECO:0000305" key="13"/>
<evidence type="ECO:0000305" key="14">
    <source>
    </source>
</evidence>
<evidence type="ECO:0000305" key="15">
    <source>
    </source>
</evidence>
<evidence type="ECO:0007744" key="16">
    <source>
        <dbReference type="PDB" id="2VZW"/>
    </source>
</evidence>
<evidence type="ECO:0007744" key="17">
    <source>
        <dbReference type="PDB" id="3ZXQ"/>
    </source>
</evidence>
<evidence type="ECO:0007829" key="18">
    <source>
        <dbReference type="PDB" id="2VZW"/>
    </source>
</evidence>
<evidence type="ECO:0007829" key="19">
    <source>
        <dbReference type="PDB" id="3ZXQ"/>
    </source>
</evidence>
<protein>
    <recommendedName>
        <fullName evidence="12">Oxygen sensor histidine kinase response regulator DosT</fullName>
        <ecNumber evidence="1">2.7.13.3</ecNumber>
    </recommendedName>
</protein>
<comment type="function">
    <text evidence="1 2 3 4 5 6 8 11">Interacts with the two-component regulatory system DevR/DevS (DosR/DosS) involved in onset of the dormancy response. Required for full induction of the DevR (DosR) regulon; required during early adaptation to anaerobiosis, to start induction of the DevR regulon (PubMed:19487478). May act as a direct hypoxia/oxygen sensor (PubMed:17600145, PubMed:17609369, PubMed:28977726). O(2) acts as a switch, with the Fe(2+)-O(2)-bound protein inactive in autophosphorylation (PubMed:17600145). Autophosphorylates under anaerobic but not aerobic conditions, binding of NO or CO has no effect on autophosphorylation (PubMed:17600145). Binds a number of gases; O(2), NO, CO (PubMed:17600145, PubMed:17609369). May be a secondary sensor for CO (PubMed:18400743). Donates a phosphate group to transcriptional regulator DevR (DosR) (PubMed:15033981, PubMed:15135056, PubMed:28977726).</text>
</comment>
<comment type="catalytic activity">
    <reaction evidence="1">
        <text>ATP + protein L-histidine = ADP + protein N-phospho-L-histidine.</text>
        <dbReference type="EC" id="2.7.13.3"/>
    </reaction>
</comment>
<comment type="cofactor">
    <cofactor evidence="2 3 11">
        <name>Mg(2+)</name>
        <dbReference type="ChEBI" id="CHEBI:18420"/>
    </cofactor>
    <text evidence="2 3 11">Mg(2+). Both Mn(2+) and Ca(2+) can substitute Mg(2+) ion in the autophosphorylation reaction but not for phosphate transfer to DevR (DosR) (PubMed:15135056). In another study Mn(2+) and Ca(2+) substitute poorly for autophosphorylation (PubMed:17600145). In another study Mg(2+) or Mn(2+) are required for transfer, but Ca(2+) does not substitute as well (PubMed:28977726).</text>
</comment>
<comment type="cofactor">
    <cofactor evidence="2 3 7">
        <name>heme</name>
        <dbReference type="ChEBI" id="CHEBI:30413"/>
    </cofactor>
    <text evidence="2 3 7">Binds 1 heme group per monomer (PubMed:15135056, PubMed:17600145, PubMed:18980385). Half-life of Fe(2+) DosT is over 60 hours in air (PubMed:17600145).</text>
</comment>
<comment type="biophysicochemical properties">
    <kinetics>
        <KM evidence="3">39 uM for ATP for autophosphorylation by deoxy-DosT</KM>
    </kinetics>
</comment>
<comment type="subcellular location">
    <subcellularLocation>
        <location evidence="14">Cytoplasm</location>
    </subcellularLocation>
</comment>
<comment type="induction">
    <text evidence="2 8">Expressed during aerobic growth, it is not further induced in hypoxia, or by nitric oxide (NO) or carbon monoxide (CO) treatment (PubMed:15135056, PubMed:19487478). Expression is not changed in a devR deletion mutant; i.e. it is not part of the dormancy regulon (PubMed:19487478).</text>
</comment>
<comment type="domain">
    <text evidence="10">The isolated ATP-binding domain (residues 451-573) crystallized as an asymmetric, domain-swapped dimer without ATP (PubMed:23486471).</text>
</comment>
<comment type="disruption phenotype">
    <text evidence="1 5 6 8">Cells lacking this gene show no changes in gene induction following hypoxia, or exposure to NO or CO (PubMed:18474359). Another publication shows a slightly reduced response to CO (PubMed:18400743). Cells lacking both this gene and DevS (DosS) have no response to hypoxia, or exposure to NO or CO showing both proteins are required for the hypoxic, NO and CO responses (PubMed:15033981). 30% decreased induction of the DevR (DosR) regulon during anaerobic growth, 50% decreased induction of the DevR regulon upon exposure to NO during aerobic growth (PubMed:19487478).</text>
</comment>
<gene>
    <name type="primary">dosT</name>
    <name type="ordered locus">Rv2027c</name>
</gene>
<keyword id="KW-0002">3D-structure</keyword>
<keyword id="KW-0963">Cytoplasm</keyword>
<keyword id="KW-0349">Heme</keyword>
<keyword id="KW-0408">Iron</keyword>
<keyword id="KW-0418">Kinase</keyword>
<keyword id="KW-0460">Magnesium</keyword>
<keyword id="KW-0479">Metal-binding</keyword>
<keyword id="KW-0597">Phosphoprotein</keyword>
<keyword id="KW-1185">Reference proteome</keyword>
<keyword id="KW-0677">Repeat</keyword>
<keyword id="KW-0808">Transferase</keyword>
<keyword id="KW-0902">Two-component regulatory system</keyword>
<sequence>MTHPDRANVNPGSPPLRETLSQLRLRELLLEVQDRIEQIVEGRDRLDGLIDAILAITSGLKLDATLRAIVHTAAELVDARYGALGVRGYDHRLVEFVYEGIDEETRHLIGSLPEGRGVLGALIEEPKPIRLDDISRHPASVGFPLHHPPMRTFLGVPVRIRDEVFGNLYLTEKADGQPFSDDDEVLVQALAAAAGIAVDNARLFEESRTREAWIEATRDIGTQMLAGADPAMVFRLIAEEALTLMAGAATLVAVPLDDEAPACEVDDLVIVEVAGEISPAVKQMTVAVSGTSIGGVFHDRTPRRFDRLDLAVDGPVEPGPALVLPLRAADTVAGVLVALRSADEQPFSDKQLDMMAAFADQAALAWRLATAQRQMREVEILTDRDRIARDLHDHVIQRLFAVGLTLQGAAPRARVPAVRESIYSSIDDLQEIIQEIRSAIFDLHAGPSRATGLRHRLDKVIDQLAIPALHTTVQYTGPLSVVDTVLANHAEAVLREAVSNAVRHANATSLAINVSVEDDVRVEVVDDGVGISGDITESGLRNLRQRADDAGGEFTVENMPTGGTLLRWSAPLR</sequence>
<reference key="1">
    <citation type="journal article" date="1998" name="Nature">
        <title>Deciphering the biology of Mycobacterium tuberculosis from the complete genome sequence.</title>
        <authorList>
            <person name="Cole S.T."/>
            <person name="Brosch R."/>
            <person name="Parkhill J."/>
            <person name="Garnier T."/>
            <person name="Churcher C.M."/>
            <person name="Harris D.E."/>
            <person name="Gordon S.V."/>
            <person name="Eiglmeier K."/>
            <person name="Gas S."/>
            <person name="Barry C.E. III"/>
            <person name="Tekaia F."/>
            <person name="Badcock K."/>
            <person name="Basham D."/>
            <person name="Brown D."/>
            <person name="Chillingworth T."/>
            <person name="Connor R."/>
            <person name="Davies R.M."/>
            <person name="Devlin K."/>
            <person name="Feltwell T."/>
            <person name="Gentles S."/>
            <person name="Hamlin N."/>
            <person name="Holroyd S."/>
            <person name="Hornsby T."/>
            <person name="Jagels K."/>
            <person name="Krogh A."/>
            <person name="McLean J."/>
            <person name="Moule S."/>
            <person name="Murphy L.D."/>
            <person name="Oliver S."/>
            <person name="Osborne J."/>
            <person name="Quail M.A."/>
            <person name="Rajandream M.A."/>
            <person name="Rogers J."/>
            <person name="Rutter S."/>
            <person name="Seeger K."/>
            <person name="Skelton S."/>
            <person name="Squares S."/>
            <person name="Squares R."/>
            <person name="Sulston J.E."/>
            <person name="Taylor K."/>
            <person name="Whitehead S."/>
            <person name="Barrell B.G."/>
        </authorList>
    </citation>
    <scope>NUCLEOTIDE SEQUENCE [LARGE SCALE GENOMIC DNA]</scope>
    <source>
        <strain>ATCC 25618 / H37Rv</strain>
    </source>
</reference>
<reference key="2">
    <citation type="journal article" date="2004" name="FEBS Lett.">
        <title>Cross talk between DevS sensor kinase homologue, Rv2027c, and DevR response regulator of Mycobacterium tuberculosis.</title>
        <authorList>
            <person name="Saini D.K."/>
            <person name="Malhotra V."/>
            <person name="Tyagi J.S."/>
        </authorList>
    </citation>
    <scope>FUNCTION</scope>
    <scope>PHOSPHORYLATION AT HIS-392</scope>
    <scope>HEME COFACTOR</scope>
    <scope>COFACTOR</scope>
    <scope>INDUCTION</scope>
    <scope>MUTAGENESIS OF HIS-392</scope>
    <source>
        <strain>ATCC 25618 / H37Rv</strain>
    </source>
</reference>
<reference key="3">
    <citation type="journal article" date="2004" name="J. Biol. Chem.">
        <title>Two sensor kinases contribute to the hypoxic response of Mycobacterium tuberculosis.</title>
        <authorList>
            <person name="Roberts D.M."/>
            <person name="Liao R.P."/>
            <person name="Wisedchaisri G."/>
            <person name="Hol W.G."/>
            <person name="Sherman D.R."/>
        </authorList>
    </citation>
    <scope>FUNCTION</scope>
    <scope>CATALYTIC ACTIVITY</scope>
    <scope>DISRUPTION PHENOTYPE</scope>
    <scope>MUTAGENESIS OF 329-HIS--HIS-394</scope>
    <source>
        <strain>ATCC 25618 / H37Rv</strain>
    </source>
</reference>
<reference key="4">
    <citation type="journal article" date="2007" name="Proc. Natl. Acad. Sci. U.S.A.">
        <title>Mycobacterium tuberculosis DosS is a redox sensor and DosT is a hypoxia sensor.</title>
        <authorList>
            <person name="Kumar A."/>
            <person name="Toledo J.C."/>
            <person name="Patel R.P."/>
            <person name="Lancaster J.R. Jr."/>
            <person name="Steyn A.J."/>
        </authorList>
    </citation>
    <scope>FUNCTION AS A HYPOXIA SENSOR</scope>
    <scope>LIGAND-BINDING</scope>
    <scope>HEME COFACTOR</scope>
    <source>
        <strain>ATCC 25618 / H37Rv</strain>
    </source>
</reference>
<reference key="5">
    <citation type="journal article" date="2007" name="Protein Sci.">
        <title>DosT and DevS are oxygen-switched kinases in Mycobacterium tuberculosis.</title>
        <authorList>
            <person name="Sousa E.H."/>
            <person name="Tuckerman J.R."/>
            <person name="Gonzalez G."/>
            <person name="Gilles-Gonzalez M.A."/>
        </authorList>
    </citation>
    <scope>FUNCTION AS AN OXYGEN SENSOR</scope>
    <scope>HEME COFACTOR</scope>
    <scope>COFACTOR</scope>
    <scope>BIOPHYSICOCHEMICAL PROPERTIES</scope>
    <scope>SUBCELLULAR LOCATION</scope>
    <scope>LIGAND-BINDING</scope>
    <source>
        <strain>ATCC 25618 / H37Rv</strain>
    </source>
</reference>
<reference key="6">
    <citation type="journal article" date="2008" name="Cell Host Microbe">
        <title>Mycobacterium tuberculosis senses host-derived carbon monoxide during macrophage infection.</title>
        <authorList>
            <person name="Shiloh M.U."/>
            <person name="Manzanillo P."/>
            <person name="Cox J.S."/>
        </authorList>
    </citation>
    <scope>FUNCTION IN CARBON MONOXIDE (CO) RESPONSE</scope>
    <scope>DISRUPTION PHENOTYPE</scope>
    <source>
        <strain>ATCC 25618 / H37Rv</strain>
    </source>
</reference>
<reference key="7">
    <citation type="journal article" date="2008" name="J. Biol. Chem.">
        <title>Heme oxygenase-1-derived carbon monoxide induces the Mycobacterium tuberculosis dormancy regulon.</title>
        <authorList>
            <person name="Kumar A."/>
            <person name="Deshane J.S."/>
            <person name="Crossman D.K."/>
            <person name="Bolisetty S."/>
            <person name="Yan B.S."/>
            <person name="Kramnik I."/>
            <person name="Agarwal A."/>
            <person name="Steyn A.J."/>
        </authorList>
    </citation>
    <scope>FUNCTION IN CARBON MONOXIDE (CO) RESPONSE</scope>
    <scope>DISRUPTION PHENOTYPE</scope>
    <scope>DORMANCY REGULON</scope>
    <source>
        <strain>ATCC 25618 / H37Rv</strain>
    </source>
</reference>
<reference key="8">
    <citation type="journal article" date="2009" name="Infect. Immun.">
        <title>Unique roles of DosT and DosS in DosR regulon induction and Mycobacterium tuberculosis dormancy.</title>
        <authorList>
            <person name="Honaker R.W."/>
            <person name="Leistikow R.L."/>
            <person name="Bartek I.L."/>
            <person name="Voskuil M.I."/>
        </authorList>
    </citation>
    <scope>FUNCTION</scope>
    <scope>INDUCTION</scope>
    <scope>DISRUPTION PHENOTYPE</scope>
    <source>
        <strain>H37Rv</strain>
    </source>
</reference>
<reference key="9">
    <citation type="journal article" date="2011" name="FEBS Lett.">
        <title>Blockage of the channel to heme by the E87 side chain in the GAF domain of Mycobacterium tuberculosis DosS confers the unique sensitivity of DosS to oxygen.</title>
        <authorList>
            <person name="Cho H.Y."/>
            <person name="Cho H.J."/>
            <person name="Kim M.H."/>
            <person name="Kang B.S."/>
        </authorList>
    </citation>
    <scope>MUTAGENESIS OF GLY-85</scope>
    <source>
        <strain>H37Rv</strain>
    </source>
</reference>
<reference key="10">
    <citation type="journal article" date="2011" name="Mol. Cell. Proteomics">
        <title>Proteogenomic analysis of Mycobacterium tuberculosis by high resolution mass spectrometry.</title>
        <authorList>
            <person name="Kelkar D.S."/>
            <person name="Kumar D."/>
            <person name="Kumar P."/>
            <person name="Balakrishnan L."/>
            <person name="Muthusamy B."/>
            <person name="Yadav A.K."/>
            <person name="Shrivastava P."/>
            <person name="Marimuthu A."/>
            <person name="Anand S."/>
            <person name="Sundaram H."/>
            <person name="Kingsbury R."/>
            <person name="Harsha H.C."/>
            <person name="Nair B."/>
            <person name="Prasad T.S."/>
            <person name="Chauhan D.S."/>
            <person name="Katoch K."/>
            <person name="Katoch V.M."/>
            <person name="Kumar P."/>
            <person name="Chaerkady R."/>
            <person name="Ramachandran S."/>
            <person name="Dash D."/>
            <person name="Pandey A."/>
        </authorList>
    </citation>
    <scope>IDENTIFICATION BY MASS SPECTROMETRY [LARGE SCALE ANALYSIS]</scope>
    <source>
        <strain>ATCC 25618 / H37Rv</strain>
    </source>
</reference>
<reference key="11">
    <citation type="journal article" date="2017" name="FEBS J.">
        <title>Target DNA stabilizes Mycobacterium tuberculosis DevR/DosR phosphorylation by the full-length oxygen sensors DevS/DosS and DosT.</title>
        <authorList>
            <person name="Sousa E.H.S."/>
            <person name="Gonzalez G."/>
            <person name="Gilles-Gonzalez M.A."/>
        </authorList>
    </citation>
    <scope>FUNCTION</scope>
    <scope>COFACTOR</scope>
    <source>
        <strain>ATCC 25618 / H37Rv</strain>
    </source>
</reference>
<reference key="12">
    <citation type="journal article" date="2013" name="Biosensors">
        <title>The DosS-DosT/DosR mycobacterial sensor system.</title>
        <authorList>
            <person name="Sivaramakrishnan S."/>
            <person name="de Montellano P.R."/>
        </authorList>
    </citation>
    <scope>REVIEW</scope>
</reference>
<reference evidence="16" key="13">
    <citation type="journal article" date="2008" name="Biochemistry">
        <title>2.3 A X-ray structure of the heme-bound GAF domain of sensory histidine kinase DosT of Mycobacterium tuberculosis.</title>
        <authorList>
            <person name="Podust L.M."/>
            <person name="Ioanoviciu A."/>
            <person name="Ortiz de Montellano P.R."/>
        </authorList>
    </citation>
    <scope>X-RAY CRYSTALLOGRAPHY (2.3 ANGSTROMS) OF 61-208 IN COMPLEX WITH HEME IN THE OXYGEN-BOUND AND OXYGEN-FREE FORM</scope>
</reference>
<reference evidence="17" key="14">
    <citation type="journal article" date="2013" name="J. Biol. Chem.">
        <title>Activation of ATP binding for the autophosphorylation of DosS, a Mycobacterium tuberculosis histidine kinase lacking an ATP lid motif.</title>
        <authorList>
            <person name="Cho H.Y."/>
            <person name="Lee Y.H."/>
            <person name="Bae Y.S."/>
            <person name="Kim E."/>
            <person name="Kang B.S."/>
        </authorList>
    </citation>
    <scope>X-RAY CRYSTALLOGRAPHY (1.90 ANGSTROMS) OF 451-573</scope>
    <scope>DOMAIN</scope>
    <source>
        <strain>H37Rv</strain>
    </source>
</reference>
<name>DOST_MYCTU</name>
<feature type="chain" id="PRO_0000392624" description="Oxygen sensor histidine kinase response regulator DosT">
    <location>
        <begin position="1"/>
        <end position="573"/>
    </location>
</feature>
<feature type="domain" description="GAF 1">
    <location>
        <begin position="61"/>
        <end position="198"/>
    </location>
</feature>
<feature type="domain" description="GAF 2">
    <location>
        <begin position="229"/>
        <end position="366"/>
    </location>
</feature>
<feature type="domain" description="Histidine kinase" evidence="13">
    <location>
        <begin position="380"/>
        <end position="573"/>
    </location>
</feature>
<feature type="region of interest" description="ATP-binding domain" evidence="15">
    <location>
        <begin position="451"/>
        <end position="573"/>
    </location>
</feature>
<feature type="binding site" description="axial binding residue" evidence="7">
    <location>
        <position position="147"/>
    </location>
    <ligand>
        <name>heme</name>
        <dbReference type="ChEBI" id="CHEBI:30413"/>
    </ligand>
    <ligandPart>
        <name>Fe</name>
        <dbReference type="ChEBI" id="CHEBI:18248"/>
    </ligandPart>
</feature>
<feature type="modified residue" description="Phosphohistidine; by autocatalysis" evidence="2">
    <location>
        <position position="392"/>
    </location>
</feature>
<feature type="mutagenesis site" description="Heme iron oxidizes more easily." evidence="9">
    <original>G</original>
    <variation>E</variation>
    <location>
        <position position="85"/>
    </location>
</feature>
<feature type="mutagenesis site" description="No autophosphorylation, no phosphate transfer to DevR (DosR).">
    <original>HDH</original>
    <variation>KDK</variation>
    <location>
        <begin position="392"/>
        <end position="394"/>
    </location>
</feature>
<feature type="mutagenesis site" description="No autophosphorylation." evidence="2">
    <original>H</original>
    <variation>Q</variation>
    <location>
        <position position="392"/>
    </location>
</feature>
<feature type="helix" evidence="18">
    <location>
        <begin position="62"/>
        <end position="77"/>
    </location>
</feature>
<feature type="strand" evidence="18">
    <location>
        <begin position="79"/>
        <end position="87"/>
    </location>
</feature>
<feature type="strand" evidence="18">
    <location>
        <begin position="91"/>
        <end position="101"/>
    </location>
</feature>
<feature type="helix" evidence="18">
    <location>
        <begin position="103"/>
        <end position="109"/>
    </location>
</feature>
<feature type="helix" evidence="18">
    <location>
        <begin position="118"/>
        <end position="124"/>
    </location>
</feature>
<feature type="strand" evidence="18">
    <location>
        <begin position="129"/>
        <end position="132"/>
    </location>
</feature>
<feature type="helix" evidence="18">
    <location>
        <begin position="134"/>
        <end position="136"/>
    </location>
</feature>
<feature type="strand" evidence="18">
    <location>
        <begin position="153"/>
        <end position="160"/>
    </location>
</feature>
<feature type="strand" evidence="18">
    <location>
        <begin position="163"/>
        <end position="174"/>
    </location>
</feature>
<feature type="helix" evidence="18">
    <location>
        <begin position="181"/>
        <end position="200"/>
    </location>
</feature>
<feature type="helix" evidence="19">
    <location>
        <begin position="453"/>
        <end position="464"/>
    </location>
</feature>
<feature type="turn" evidence="19">
    <location>
        <begin position="466"/>
        <end position="468"/>
    </location>
</feature>
<feature type="strand" evidence="19">
    <location>
        <begin position="469"/>
        <end position="477"/>
    </location>
</feature>
<feature type="helix" evidence="19">
    <location>
        <begin position="479"/>
        <end position="481"/>
    </location>
</feature>
<feature type="helix" evidence="19">
    <location>
        <begin position="484"/>
        <end position="502"/>
    </location>
</feature>
<feature type="strand" evidence="19">
    <location>
        <begin position="509"/>
        <end position="526"/>
    </location>
</feature>
<feature type="helix" evidence="19">
    <location>
        <begin position="533"/>
        <end position="535"/>
    </location>
</feature>
<feature type="helix" evidence="19">
    <location>
        <begin position="537"/>
        <end position="550"/>
    </location>
</feature>
<feature type="strand" evidence="19">
    <location>
        <begin position="553"/>
        <end position="558"/>
    </location>
</feature>
<feature type="strand" evidence="19">
    <location>
        <begin position="562"/>
        <end position="571"/>
    </location>
</feature>